<dbReference type="EMBL" id="DQ345366">
    <property type="protein sequence ID" value="ABC74974.1"/>
    <property type="molecule type" value="mRNA"/>
</dbReference>
<dbReference type="ConoServer" id="1152">
    <property type="toxin name" value="Lt1C precursor"/>
</dbReference>
<dbReference type="GO" id="GO:0005576">
    <property type="term" value="C:extracellular region"/>
    <property type="evidence" value="ECO:0007669"/>
    <property type="project" value="UniProtKB-SubCell"/>
</dbReference>
<dbReference type="GO" id="GO:0035792">
    <property type="term" value="C:host cell postsynaptic membrane"/>
    <property type="evidence" value="ECO:0007669"/>
    <property type="project" value="UniProtKB-KW"/>
</dbReference>
<dbReference type="GO" id="GO:0030550">
    <property type="term" value="F:acetylcholine receptor inhibitor activity"/>
    <property type="evidence" value="ECO:0007669"/>
    <property type="project" value="UniProtKB-KW"/>
</dbReference>
<dbReference type="GO" id="GO:0099106">
    <property type="term" value="F:ion channel regulator activity"/>
    <property type="evidence" value="ECO:0007669"/>
    <property type="project" value="UniProtKB-KW"/>
</dbReference>
<dbReference type="GO" id="GO:0090729">
    <property type="term" value="F:toxin activity"/>
    <property type="evidence" value="ECO:0007669"/>
    <property type="project" value="UniProtKB-KW"/>
</dbReference>
<dbReference type="InterPro" id="IPR009958">
    <property type="entry name" value="Conotoxin_a-typ"/>
</dbReference>
<dbReference type="Pfam" id="PF07365">
    <property type="entry name" value="Toxin_8"/>
    <property type="match status" value="1"/>
</dbReference>
<name>CA13_CONLT</name>
<proteinExistence type="inferred from homology"/>
<keyword id="KW-0008">Acetylcholine receptor inhibiting toxin</keyword>
<keyword id="KW-1015">Disulfide bond</keyword>
<keyword id="KW-0872">Ion channel impairing toxin</keyword>
<keyword id="KW-0528">Neurotoxin</keyword>
<keyword id="KW-0629">Postsynaptic neurotoxin</keyword>
<keyword id="KW-0964">Secreted</keyword>
<keyword id="KW-0732">Signal</keyword>
<keyword id="KW-0800">Toxin</keyword>
<feature type="signal peptide" evidence="3">
    <location>
        <begin position="1"/>
        <end position="21"/>
    </location>
</feature>
<feature type="propeptide" id="PRO_0000315421" evidence="6">
    <location>
        <begin position="22"/>
        <end position="45"/>
    </location>
</feature>
<feature type="peptide" id="PRO_0000315422" description="Alpha-conotoxin-like Lt1.3" evidence="6">
    <location>
        <begin position="46"/>
        <end position="64"/>
    </location>
</feature>
<feature type="region of interest" description="Lacks the Ser-Xaa-Pro motif that is crucial for potent interaction with nAChR" evidence="5">
    <location>
        <begin position="49"/>
        <end position="51"/>
    </location>
</feature>
<feature type="disulfide bond" evidence="1">
    <location>
        <begin position="47"/>
        <end position="53"/>
    </location>
</feature>
<feature type="disulfide bond" evidence="1">
    <location>
        <begin position="48"/>
        <end position="61"/>
    </location>
</feature>
<sequence length="64" mass="7500">MGMRMMFTMFLLVVLTTTVVSFNLDRESNHENRRTSNQITRGMWDECCDDPPCRQNNMEHCPAS</sequence>
<reference key="1">
    <citation type="journal article" date="2006" name="Genomics">
        <title>Diversity and evolution of conotoxins based on gene expression profiling of Conus litteratus.</title>
        <authorList>
            <person name="Pi C."/>
            <person name="Liu J."/>
            <person name="Peng C."/>
            <person name="Liu Y."/>
            <person name="Jiang X."/>
            <person name="Zhao Y."/>
            <person name="Tang S."/>
            <person name="Wang L."/>
            <person name="Dong M."/>
            <person name="Chen S."/>
            <person name="Xu A."/>
        </authorList>
    </citation>
    <scope>NUCLEOTIDE SEQUENCE [MRNA]</scope>
    <source>
        <tissue>Venom duct</tissue>
    </source>
</reference>
<evidence type="ECO:0000250" key="1">
    <source>
        <dbReference type="UniProtKB" id="P56636"/>
    </source>
</evidence>
<evidence type="ECO:0000250" key="2">
    <source>
        <dbReference type="UniProtKB" id="Q2I2R8"/>
    </source>
</evidence>
<evidence type="ECO:0000255" key="3"/>
<evidence type="ECO:0000303" key="4">
    <source>
    </source>
</evidence>
<evidence type="ECO:0000305" key="5"/>
<evidence type="ECO:0000305" key="6">
    <source>
    </source>
</evidence>
<organism>
    <name type="scientific">Conus litteratus</name>
    <name type="common">Lettered cone</name>
    <dbReference type="NCBI Taxonomy" id="89445"/>
    <lineage>
        <taxon>Eukaryota</taxon>
        <taxon>Metazoa</taxon>
        <taxon>Spiralia</taxon>
        <taxon>Lophotrochozoa</taxon>
        <taxon>Mollusca</taxon>
        <taxon>Gastropoda</taxon>
        <taxon>Caenogastropoda</taxon>
        <taxon>Neogastropoda</taxon>
        <taxon>Conoidea</taxon>
        <taxon>Conidae</taxon>
        <taxon>Conus</taxon>
        <taxon>Elisaconus</taxon>
    </lineage>
</organism>
<comment type="function">
    <text evidence="2">Alpha-conotoxins act on postsynaptic membranes, they bind to the nicotinic acetylcholine receptors (nAChR) and thus inhibit them (By similarity). Has possibly a distinct nAChR binding mode from other alpha-conotoxins, due to a different three residue motif (lacks the Ser-Xaa-Pro motif) (By similarity).</text>
</comment>
<comment type="subcellular location">
    <subcellularLocation>
        <location evidence="6">Secreted</location>
    </subcellularLocation>
</comment>
<comment type="tissue specificity">
    <text evidence="6">Expressed by the venom duct.</text>
</comment>
<comment type="domain">
    <text evidence="5">The cysteine framework is I (CC-C-C). Alpha4/7 pattern.</text>
</comment>
<comment type="similarity">
    <text evidence="5">Belongs to the conotoxin A superfamily.</text>
</comment>
<protein>
    <recommendedName>
        <fullName evidence="4">Alpha-conotoxin-like Lt1.3</fullName>
    </recommendedName>
    <alternativeName>
        <fullName>Lt1c</fullName>
    </alternativeName>
</protein>
<accession>Q2I2R6</accession>